<name>AA2DB_DANRE</name>
<dbReference type="EMBL" id="AY120896">
    <property type="protein sequence ID" value="AAM78032.1"/>
    <property type="molecule type" value="Genomic_DNA"/>
</dbReference>
<dbReference type="RefSeq" id="NP_919346.1">
    <property type="nucleotide sequence ID" value="NM_194365.1"/>
</dbReference>
<dbReference type="SMR" id="Q8JG69"/>
<dbReference type="FunCoup" id="Q8JG69">
    <property type="interactions" value="35"/>
</dbReference>
<dbReference type="GlyCosmos" id="Q8JG69">
    <property type="glycosylation" value="3 sites, No reported glycans"/>
</dbReference>
<dbReference type="PaxDb" id="7955-ENSDARP00000071372"/>
<dbReference type="GeneID" id="266755"/>
<dbReference type="KEGG" id="dre:266755"/>
<dbReference type="AGR" id="ZFIN:ZDB-GENE-021010-5"/>
<dbReference type="CTD" id="266755"/>
<dbReference type="ZFIN" id="ZDB-GENE-021010-5">
    <property type="gene designation" value="adra2db"/>
</dbReference>
<dbReference type="eggNOG" id="KOG3656">
    <property type="taxonomic scope" value="Eukaryota"/>
</dbReference>
<dbReference type="InParanoid" id="Q8JG69"/>
<dbReference type="OrthoDB" id="5975661at2759"/>
<dbReference type="PhylomeDB" id="Q8JG69"/>
<dbReference type="PRO" id="PR:Q8JG69"/>
<dbReference type="Proteomes" id="UP000000437">
    <property type="component" value="Alternate scaffold 21"/>
</dbReference>
<dbReference type="Proteomes" id="UP000000437">
    <property type="component" value="Chromosome 21"/>
</dbReference>
<dbReference type="GO" id="GO:0005886">
    <property type="term" value="C:plasma membrane"/>
    <property type="evidence" value="ECO:0000250"/>
    <property type="project" value="ZFIN"/>
</dbReference>
<dbReference type="GO" id="GO:0004938">
    <property type="term" value="F:alpha2-adrenergic receptor activity"/>
    <property type="evidence" value="ECO:0000314"/>
    <property type="project" value="UniProtKB"/>
</dbReference>
<dbReference type="GO" id="GO:0051379">
    <property type="term" value="F:epinephrine binding"/>
    <property type="evidence" value="ECO:0000318"/>
    <property type="project" value="GO_Central"/>
</dbReference>
<dbReference type="GO" id="GO:0071881">
    <property type="term" value="P:adenylate cyclase-inhibiting adrenergic receptor signaling pathway"/>
    <property type="evidence" value="ECO:0000314"/>
    <property type="project" value="UniProtKB"/>
</dbReference>
<dbReference type="GO" id="GO:0030168">
    <property type="term" value="P:platelet activation"/>
    <property type="evidence" value="ECO:0007669"/>
    <property type="project" value="InterPro"/>
</dbReference>
<dbReference type="GO" id="GO:0006940">
    <property type="term" value="P:regulation of smooth muscle contraction"/>
    <property type="evidence" value="ECO:0007669"/>
    <property type="project" value="InterPro"/>
</dbReference>
<dbReference type="GO" id="GO:0019229">
    <property type="term" value="P:regulation of vasoconstriction"/>
    <property type="evidence" value="ECO:0007669"/>
    <property type="project" value="InterPro"/>
</dbReference>
<dbReference type="CDD" id="cd15324">
    <property type="entry name" value="7tmA_alpha-2D_AR"/>
    <property type="match status" value="1"/>
</dbReference>
<dbReference type="FunFam" id="1.20.1070.10:FF:000100">
    <property type="entry name" value="alpha-2B adrenergic receptor"/>
    <property type="match status" value="1"/>
</dbReference>
<dbReference type="Gene3D" id="1.20.1070.10">
    <property type="entry name" value="Rhodopsin 7-helix transmembrane proteins"/>
    <property type="match status" value="1"/>
</dbReference>
<dbReference type="InterPro" id="IPR002233">
    <property type="entry name" value="ADR_fam"/>
</dbReference>
<dbReference type="InterPro" id="IPR000735">
    <property type="entry name" value="ADRA2C_rcpt"/>
</dbReference>
<dbReference type="InterPro" id="IPR000276">
    <property type="entry name" value="GPCR_Rhodpsn"/>
</dbReference>
<dbReference type="InterPro" id="IPR017452">
    <property type="entry name" value="GPCR_Rhodpsn_7TM"/>
</dbReference>
<dbReference type="PANTHER" id="PTHR24248">
    <property type="entry name" value="ADRENERGIC RECEPTOR-RELATED G-PROTEIN COUPLED RECEPTOR"/>
    <property type="match status" value="1"/>
</dbReference>
<dbReference type="PANTHER" id="PTHR24248:SF0">
    <property type="entry name" value="ALPHA-2DA ADRENERGIC RECEPTOR-RELATED"/>
    <property type="match status" value="1"/>
</dbReference>
<dbReference type="Pfam" id="PF00001">
    <property type="entry name" value="7tm_1"/>
    <property type="match status" value="1"/>
</dbReference>
<dbReference type="PRINTS" id="PR01103">
    <property type="entry name" value="ADRENERGICR"/>
</dbReference>
<dbReference type="PRINTS" id="PR00560">
    <property type="entry name" value="ADRENRGCA2CR"/>
</dbReference>
<dbReference type="PRINTS" id="PR00237">
    <property type="entry name" value="GPCRRHODOPSN"/>
</dbReference>
<dbReference type="SMART" id="SM01381">
    <property type="entry name" value="7TM_GPCR_Srsx"/>
    <property type="match status" value="1"/>
</dbReference>
<dbReference type="SUPFAM" id="SSF81321">
    <property type="entry name" value="Family A G protein-coupled receptor-like"/>
    <property type="match status" value="1"/>
</dbReference>
<dbReference type="PROSITE" id="PS00237">
    <property type="entry name" value="G_PROTEIN_RECEP_F1_1"/>
    <property type="match status" value="1"/>
</dbReference>
<dbReference type="PROSITE" id="PS50262">
    <property type="entry name" value="G_PROTEIN_RECEP_F1_2"/>
    <property type="match status" value="1"/>
</dbReference>
<gene>
    <name type="primary">adra2db</name>
</gene>
<sequence length="415" mass="46863">MDLSTITFLLPNSSEDTNGTSAPRLPPHSQCASVLIVLVVTVIILVTIVGNVLVVVAVFTSRALRAPQNLFLVSLAAADILVATLVIPFSLANEVMGYWYLGSTWCAFYLALDVLFCTSSIVHLCAISLDRYWSVTKAVSYNLKRTPRRIKIMITVVWVISAVISFPPLLMTKHDELECLLNNETWYILSSCIVSFFAPGLIMILVYCRIYRVAKQRASTVFVAKNGMERQPSQSETCFVRKGKSEVESPSSHSSGSRERKGELDDIDLEESSVSNRHRNSRFAKSRKVEGAQSCPKPNGRLSWACSRASELEQEPRARQLSLSKSKLAQMREKRFTFVLAVVMGVFVLCWFPFFFTYSLHAICRKSCTIPDSLFNLFFWIGYCNSSVNPIIYTIFNRDFRKAFKKIMCRHSTRT</sequence>
<reference key="1">
    <citation type="journal article" date="2004" name="Mol. Biol. Evol.">
        <title>Identification of duplicated fourth alpha2-adrenergic receptor subtype by cloning and mapping of five receptor genes in zebrafish.</title>
        <authorList>
            <person name="Ruuskanen J.O."/>
            <person name="Xhaard H."/>
            <person name="Marjamaki A."/>
            <person name="Salaneck E."/>
            <person name="Salminen T."/>
            <person name="Yan Y.-L."/>
            <person name="Postlethwait J.H."/>
            <person name="Johnson M.S."/>
            <person name="Larhammar D."/>
            <person name="Scheinin M."/>
        </authorList>
    </citation>
    <scope>NUCLEOTIDE SEQUENCE [GENOMIC DNA]</scope>
</reference>
<reference key="2">
    <citation type="journal article" date="2005" name="Br. J. Pharmacol.">
        <title>Conserved structural, pharmacological and functional properties among the three human and five zebrafish alpha2-adrenoceptors.</title>
        <authorList>
            <person name="Ruuskanen J.O."/>
            <person name="Laurila J."/>
            <person name="Xhaard H."/>
            <person name="Rantanen V.-V."/>
            <person name="Vuoriluoto K."/>
            <person name="Wurster S."/>
            <person name="Marjamaki A."/>
            <person name="Vainio M."/>
            <person name="Johnson M.S."/>
            <person name="Scheinin M."/>
        </authorList>
    </citation>
    <scope>FUNCTION</scope>
    <scope>3D-STRUCTURE MODELING</scope>
</reference>
<feature type="chain" id="PRO_0000069008" description="Alpha-2Db adrenergic receptor">
    <location>
        <begin position="1"/>
        <end position="415"/>
    </location>
</feature>
<feature type="topological domain" description="Extracellular" evidence="1">
    <location>
        <begin position="1"/>
        <end position="33"/>
    </location>
</feature>
<feature type="transmembrane region" description="Helical; Name=1" evidence="1">
    <location>
        <begin position="34"/>
        <end position="58"/>
    </location>
</feature>
<feature type="topological domain" description="Cytoplasmic" evidence="1">
    <location>
        <begin position="59"/>
        <end position="70"/>
    </location>
</feature>
<feature type="transmembrane region" description="Helical; Name=2" evidence="1">
    <location>
        <begin position="71"/>
        <end position="96"/>
    </location>
</feature>
<feature type="topological domain" description="Extracellular" evidence="1">
    <location>
        <begin position="97"/>
        <end position="106"/>
    </location>
</feature>
<feature type="transmembrane region" description="Helical; Name=3" evidence="1">
    <location>
        <begin position="107"/>
        <end position="129"/>
    </location>
</feature>
<feature type="topological domain" description="Cytoplasmic" evidence="1">
    <location>
        <begin position="130"/>
        <end position="150"/>
    </location>
</feature>
<feature type="transmembrane region" description="Helical; Name=4" evidence="1">
    <location>
        <begin position="151"/>
        <end position="173"/>
    </location>
</feature>
<feature type="topological domain" description="Extracellular" evidence="1">
    <location>
        <begin position="174"/>
        <end position="184"/>
    </location>
</feature>
<feature type="transmembrane region" description="Helical; Name=5" evidence="1">
    <location>
        <begin position="185"/>
        <end position="208"/>
    </location>
</feature>
<feature type="topological domain" description="Cytoplasmic" evidence="1">
    <location>
        <begin position="209"/>
        <end position="339"/>
    </location>
</feature>
<feature type="transmembrane region" description="Helical; Name=6" evidence="1">
    <location>
        <begin position="340"/>
        <end position="363"/>
    </location>
</feature>
<feature type="topological domain" description="Extracellular" evidence="1">
    <location>
        <begin position="364"/>
        <end position="376"/>
    </location>
</feature>
<feature type="transmembrane region" description="Helical; Name=7" evidence="1">
    <location>
        <begin position="377"/>
        <end position="397"/>
    </location>
</feature>
<feature type="topological domain" description="Cytoplasmic" evidence="1">
    <location>
        <begin position="398"/>
        <end position="415"/>
    </location>
</feature>
<feature type="region of interest" description="Disordered" evidence="4">
    <location>
        <begin position="234"/>
        <end position="299"/>
    </location>
</feature>
<feature type="compositionally biased region" description="Basic residues" evidence="4">
    <location>
        <begin position="276"/>
        <end position="286"/>
    </location>
</feature>
<feature type="site" description="Implicated in ligand binding" evidence="1">
    <location>
        <position position="113"/>
    </location>
</feature>
<feature type="site" description="Implicated in catechol agonist binding and receptor activation" evidence="1">
    <location>
        <position position="191"/>
    </location>
</feature>
<feature type="site" description="Implicated in catechol agonist binding and receptor activation" evidence="1">
    <location>
        <position position="195"/>
    </location>
</feature>
<feature type="glycosylation site" description="N-linked (GlcNAc...) asparagine" evidence="2">
    <location>
        <position position="12"/>
    </location>
</feature>
<feature type="glycosylation site" description="N-linked (GlcNAc...) asparagine" evidence="2">
    <location>
        <position position="18"/>
    </location>
</feature>
<feature type="glycosylation site" description="N-linked (GlcNAc...) asparagine" evidence="2">
    <location>
        <position position="183"/>
    </location>
</feature>
<feature type="disulfide bond" evidence="3">
    <location>
        <begin position="106"/>
        <end position="179"/>
    </location>
</feature>
<comment type="function">
    <text evidence="5">Alpha-2 adrenergic receptors mediate the catecholamine-induced inhibition of adenylate cyclase through the action of G proteins. The order of potency for this receptor is dexmedetomidine &gt; norepinephrine = epinephrine &gt; oxymetazoline.</text>
</comment>
<comment type="subcellular location">
    <subcellularLocation>
        <location>Cell membrane</location>
        <topology>Multi-pass membrane protein</topology>
    </subcellularLocation>
</comment>
<comment type="similarity">
    <text evidence="3">Belongs to the G-protein coupled receptor 1 family. Adrenergic receptor subfamily. ADRA2D sub-subfamily.</text>
</comment>
<organism>
    <name type="scientific">Danio rerio</name>
    <name type="common">Zebrafish</name>
    <name type="synonym">Brachydanio rerio</name>
    <dbReference type="NCBI Taxonomy" id="7955"/>
    <lineage>
        <taxon>Eukaryota</taxon>
        <taxon>Metazoa</taxon>
        <taxon>Chordata</taxon>
        <taxon>Craniata</taxon>
        <taxon>Vertebrata</taxon>
        <taxon>Euteleostomi</taxon>
        <taxon>Actinopterygii</taxon>
        <taxon>Neopterygii</taxon>
        <taxon>Teleostei</taxon>
        <taxon>Ostariophysi</taxon>
        <taxon>Cypriniformes</taxon>
        <taxon>Danionidae</taxon>
        <taxon>Danioninae</taxon>
        <taxon>Danio</taxon>
    </lineage>
</organism>
<evidence type="ECO:0000250" key="1"/>
<evidence type="ECO:0000255" key="2"/>
<evidence type="ECO:0000255" key="3">
    <source>
        <dbReference type="PROSITE-ProRule" id="PRU00521"/>
    </source>
</evidence>
<evidence type="ECO:0000256" key="4">
    <source>
        <dbReference type="SAM" id="MobiDB-lite"/>
    </source>
</evidence>
<evidence type="ECO:0000269" key="5">
    <source>
    </source>
</evidence>
<proteinExistence type="inferred from homology"/>
<keyword id="KW-1003">Cell membrane</keyword>
<keyword id="KW-1015">Disulfide bond</keyword>
<keyword id="KW-0297">G-protein coupled receptor</keyword>
<keyword id="KW-0325">Glycoprotein</keyword>
<keyword id="KW-0472">Membrane</keyword>
<keyword id="KW-0675">Receptor</keyword>
<keyword id="KW-1185">Reference proteome</keyword>
<keyword id="KW-0807">Transducer</keyword>
<keyword id="KW-0812">Transmembrane</keyword>
<keyword id="KW-1133">Transmembrane helix</keyword>
<accession>Q8JG69</accession>
<protein>
    <recommendedName>
        <fullName>Alpha-2Db adrenergic receptor</fullName>
    </recommendedName>
    <alternativeName>
        <fullName>Alpha-2Db adrenoceptor</fullName>
        <shortName>Alpha(2Db)AR</shortName>
    </alternativeName>
    <alternativeName>
        <fullName>Alpha-2Db adrenoreceptor</fullName>
    </alternativeName>
</protein>